<feature type="chain" id="PRO_0000087920" description="Type II methyltransferase M.BamHI">
    <location>
        <begin position="1"/>
        <end position="423"/>
    </location>
</feature>
<feature type="region of interest" description="Disordered" evidence="1">
    <location>
        <begin position="397"/>
        <end position="423"/>
    </location>
</feature>
<feature type="compositionally biased region" description="Basic and acidic residues" evidence="1">
    <location>
        <begin position="397"/>
        <end position="414"/>
    </location>
</feature>
<feature type="mutagenesis site" description="Has decreased methylase activity." evidence="2">
    <location>
        <begin position="422"/>
        <end position="423"/>
    </location>
</feature>
<comment type="function">
    <text evidence="2 3">A beta subtype methylase, recognizes the double-stranded sequence 5'-GGATCC-3', methylates C-5 on both strands, and protects the DNA from cleavage by the BamHI endonuclease.</text>
</comment>
<comment type="catalytic activity">
    <reaction evidence="2">
        <text>a 2'-deoxycytidine in DNA + S-adenosyl-L-methionine = an N(4)-methyl-2'-deoxycytidine in DNA + S-adenosyl-L-homocysteine + H(+)</text>
        <dbReference type="Rhea" id="RHEA:16857"/>
        <dbReference type="Rhea" id="RHEA-COMP:11369"/>
        <dbReference type="Rhea" id="RHEA-COMP:13674"/>
        <dbReference type="ChEBI" id="CHEBI:15378"/>
        <dbReference type="ChEBI" id="CHEBI:57856"/>
        <dbReference type="ChEBI" id="CHEBI:59789"/>
        <dbReference type="ChEBI" id="CHEBI:85452"/>
        <dbReference type="ChEBI" id="CHEBI:137933"/>
        <dbReference type="EC" id="2.1.1.113"/>
    </reaction>
</comment>
<comment type="biophysicochemical properties">
    <temperatureDependence>
        <text evidence="2">The protein is very stable, after 18 months at -20 degrees Celsius it retains 90% of its activity.</text>
    </temperatureDependence>
</comment>
<comment type="miscellaneous">
    <text evidence="2">The protein sequnce was determined following expression in E.coli.</text>
</comment>
<comment type="similarity">
    <text evidence="5">Belongs to the N(4)/N(6)-methyltransferase family.</text>
</comment>
<comment type="sequence caution" evidence="5">
    <conflict type="erroneous initiation">
        <sequence resource="EMBL-CDS" id="CAA38200"/>
    </conflict>
    <text>Truncated N-terminus.</text>
</comment>
<keyword id="KW-0903">Direct protein sequencing</keyword>
<keyword id="KW-0238">DNA-binding</keyword>
<keyword id="KW-0489">Methyltransferase</keyword>
<keyword id="KW-0680">Restriction system</keyword>
<keyword id="KW-0949">S-adenosyl-L-methionine</keyword>
<keyword id="KW-0808">Transferase</keyword>
<accession>P23941</accession>
<name>MTB1_BACAM</name>
<reference key="1">
    <citation type="journal article" date="1991" name="Nucleic Acids Res.">
        <title>Characterization of the cloned BamHI restriction modification system: its nucleotide sequence, properties of the methylase, and expression in heterologous hosts.</title>
        <authorList>
            <person name="Brooks J.E."/>
            <person name="Nathan P.D."/>
            <person name="Landry D."/>
            <person name="Sznyter L.A."/>
            <person name="White-Rees P."/>
            <person name="Ives C.L."/>
            <person name="Moran L.S."/>
            <person name="Slatko B.E."/>
            <person name="Benner J.S."/>
        </authorList>
    </citation>
    <scope>NUCLEOTIDE SEQUENCE [GENOMIC DNA]</scope>
    <scope>PROTEIN SEQUENCE OF 1-19</scope>
    <scope>FUNCTION</scope>
    <scope>CATALYTIC ACTIVITY</scope>
    <scope>BIOPHYSICOCHEMICAL PROPERTIES</scope>
    <scope>MUTAGENESIS OF 422-LEU-GLU-423</scope>
    <source>
        <strain>ATCC 49763 / H</strain>
    </source>
</reference>
<reference key="2">
    <citation type="submission" date="2010-12" db="EMBL/GenBank/DDBJ databases">
        <authorList>
            <person name="Benner J.S."/>
        </authorList>
    </citation>
    <scope>SEQUENCE REVISION TO 28; 53; 167; 207 AND 348</scope>
</reference>
<reference key="3">
    <citation type="journal article" date="1990" name="Nucleic Acids Res.">
        <title>The complete sequence of the Bacillus amyloliquefaciens strain H, cellular BamHI methylase gene.</title>
        <authorList>
            <person name="Vanek P.G."/>
            <person name="Connaughton J.F."/>
            <person name="Kaloss W.D."/>
            <person name="Chirikjian J.G."/>
        </authorList>
    </citation>
    <scope>NUCLEOTIDE SEQUENCE [GENOMIC DNA] OF 24-423</scope>
    <source>
        <strain>ATCC 49763 / H</strain>
    </source>
</reference>
<reference key="4">
    <citation type="journal article" date="2003" name="Nucleic Acids Res.">
        <title>A nomenclature for restriction enzymes, DNA methyltransferases, homing endonucleases and their genes.</title>
        <authorList>
            <person name="Roberts R.J."/>
            <person name="Belfort M."/>
            <person name="Bestor T."/>
            <person name="Bhagwat A.S."/>
            <person name="Bickle T.A."/>
            <person name="Bitinaite J."/>
            <person name="Blumenthal R.M."/>
            <person name="Degtyarev S.K."/>
            <person name="Dryden D.T."/>
            <person name="Dybvig K."/>
            <person name="Firman K."/>
            <person name="Gromova E.S."/>
            <person name="Gumport R.I."/>
            <person name="Halford S.E."/>
            <person name="Hattman S."/>
            <person name="Heitman J."/>
            <person name="Hornby D.P."/>
            <person name="Janulaitis A."/>
            <person name="Jeltsch A."/>
            <person name="Josephsen J."/>
            <person name="Kiss A."/>
            <person name="Klaenhammer T.R."/>
            <person name="Kobayashi I."/>
            <person name="Kong H."/>
            <person name="Krueger D.H."/>
            <person name="Lacks S."/>
            <person name="Marinus M.G."/>
            <person name="Miyahara M."/>
            <person name="Morgan R.D."/>
            <person name="Murray N.E."/>
            <person name="Nagaraja V."/>
            <person name="Piekarowicz A."/>
            <person name="Pingoud A."/>
            <person name="Raleigh E."/>
            <person name="Rao D.N."/>
            <person name="Reich N."/>
            <person name="Repin V.E."/>
            <person name="Selker E.U."/>
            <person name="Shaw P.C."/>
            <person name="Stein D.C."/>
            <person name="Stoddard B.L."/>
            <person name="Szybalski W."/>
            <person name="Trautner T.A."/>
            <person name="Van Etten J.L."/>
            <person name="Vitor J.M."/>
            <person name="Wilson G.G."/>
            <person name="Xu S.Y."/>
        </authorList>
    </citation>
    <scope>NOMENCLATURE</scope>
    <scope>SUBTYPE</scope>
</reference>
<evidence type="ECO:0000256" key="1">
    <source>
        <dbReference type="SAM" id="MobiDB-lite"/>
    </source>
</evidence>
<evidence type="ECO:0000269" key="2">
    <source>
    </source>
</evidence>
<evidence type="ECO:0000303" key="3">
    <source>
    </source>
</evidence>
<evidence type="ECO:0000303" key="4">
    <source>
    </source>
</evidence>
<evidence type="ECO:0000305" key="5"/>
<protein>
    <recommendedName>
        <fullName evidence="3">Type II methyltransferase M.BamHI</fullName>
        <shortName evidence="4">M.BamHI</shortName>
        <ecNumber evidence="2">2.1.1.113</ecNumber>
    </recommendedName>
    <alternativeName>
        <fullName>Modification methylase BamHI</fullName>
    </alternativeName>
    <alternativeName>
        <fullName>N(4)- cytosine-specific methyltransferase BamHI</fullName>
    </alternativeName>
</protein>
<proteinExistence type="evidence at protein level"/>
<sequence length="423" mass="49136">MRFFSVFDIVKNKANQLGYTETEMYAVLKNYNVNKKDLLAYKENGVIPTDKVLNGILSYLGMTKVELELKLGRIPAGLEDVFLNNTKEIAKILENKNSVKLNEFNSIQEIKPYFYTDLGKLYNGDCLELFKQVPDENVDTIFADPPFNLDKEYDEGVTDKNSFSGYLDWYYKWIDECIRVLKPGGSLFIYNIPKWNTYLSEYLNRKLNFRNWITVDMKFGLPIQNRLYPANYSLLYYVKGDKPKTFNVQRIPLQTCPHCGREIKDYGGYKNKMNPKGVTLSDVWSDIYPVRHSSSKNRKFNELSVKLLDRIITMSTNEGDVVLDPFGGSGTTFAVSEMLGRKWIGFELGNCEIIKERLKNKDKDKKLLGKVYEEKNKLFPNRVKELRKKNGLWIDDDFRQDHEGNSKGDKKNENNDQISLSLE</sequence>
<gene>
    <name evidence="4" type="primary">bamHIM</name>
</gene>
<dbReference type="EC" id="2.1.1.113" evidence="2"/>
<dbReference type="EMBL" id="X55285">
    <property type="protein sequence ID" value="CAA38998.2"/>
    <property type="molecule type" value="Genomic_DNA"/>
</dbReference>
<dbReference type="EMBL" id="X54303">
    <property type="protein sequence ID" value="CAA38200.1"/>
    <property type="status" value="ALT_INIT"/>
    <property type="molecule type" value="Genomic_DNA"/>
</dbReference>
<dbReference type="PIR" id="S26843">
    <property type="entry name" value="S26843"/>
</dbReference>
<dbReference type="RefSeq" id="WP_013353548.1">
    <property type="nucleotide sequence ID" value="NZ_VRTX01000001.1"/>
</dbReference>
<dbReference type="SMR" id="P23941"/>
<dbReference type="STRING" id="692420.BAMF_3132"/>
<dbReference type="REBASE" id="203429">
    <property type="entry name" value="M.Bat1359ORF4014P"/>
</dbReference>
<dbReference type="REBASE" id="203436">
    <property type="entry name" value="M.Bam1267ORF3424P"/>
</dbReference>
<dbReference type="REBASE" id="3293">
    <property type="entry name" value="M.BamHI"/>
</dbReference>
<dbReference type="OrthoDB" id="9800801at2"/>
<dbReference type="BRENDA" id="2.1.1.113">
    <property type="organism ID" value="630"/>
</dbReference>
<dbReference type="PRO" id="PR:P23941"/>
<dbReference type="GO" id="GO:0005737">
    <property type="term" value="C:cytoplasm"/>
    <property type="evidence" value="ECO:0007669"/>
    <property type="project" value="TreeGrafter"/>
</dbReference>
<dbReference type="GO" id="GO:0003677">
    <property type="term" value="F:DNA binding"/>
    <property type="evidence" value="ECO:0007669"/>
    <property type="project" value="UniProtKB-KW"/>
</dbReference>
<dbReference type="GO" id="GO:0008170">
    <property type="term" value="F:N-methyltransferase activity"/>
    <property type="evidence" value="ECO:0007669"/>
    <property type="project" value="InterPro"/>
</dbReference>
<dbReference type="GO" id="GO:0009007">
    <property type="term" value="F:site-specific DNA-methyltransferase (adenine-specific) activity"/>
    <property type="evidence" value="ECO:0007669"/>
    <property type="project" value="TreeGrafter"/>
</dbReference>
<dbReference type="GO" id="GO:0015667">
    <property type="term" value="F:site-specific DNA-methyltransferase (cytosine-N4-specific) activity"/>
    <property type="evidence" value="ECO:0007669"/>
    <property type="project" value="UniProtKB-EC"/>
</dbReference>
<dbReference type="GO" id="GO:0009307">
    <property type="term" value="P:DNA restriction-modification system"/>
    <property type="evidence" value="ECO:0007669"/>
    <property type="project" value="UniProtKB-KW"/>
</dbReference>
<dbReference type="GO" id="GO:0032259">
    <property type="term" value="P:methylation"/>
    <property type="evidence" value="ECO:0007669"/>
    <property type="project" value="UniProtKB-KW"/>
</dbReference>
<dbReference type="CDD" id="cd02440">
    <property type="entry name" value="AdoMet_MTases"/>
    <property type="match status" value="1"/>
</dbReference>
<dbReference type="Gene3D" id="3.40.50.150">
    <property type="entry name" value="Vaccinia Virus protein VP39"/>
    <property type="match status" value="1"/>
</dbReference>
<dbReference type="InterPro" id="IPR002941">
    <property type="entry name" value="DNA_methylase_N4/N6"/>
</dbReference>
<dbReference type="InterPro" id="IPR002052">
    <property type="entry name" value="DNA_methylase_N6_adenine_CS"/>
</dbReference>
<dbReference type="InterPro" id="IPR002295">
    <property type="entry name" value="N4/N6-MTase_EcoPI_Mod-like"/>
</dbReference>
<dbReference type="InterPro" id="IPR029063">
    <property type="entry name" value="SAM-dependent_MTases_sf"/>
</dbReference>
<dbReference type="PANTHER" id="PTHR13370">
    <property type="entry name" value="RNA METHYLASE-RELATED"/>
    <property type="match status" value="1"/>
</dbReference>
<dbReference type="PANTHER" id="PTHR13370:SF3">
    <property type="entry name" value="TRNA (GUANINE(10)-N2)-METHYLTRANSFERASE HOMOLOG"/>
    <property type="match status" value="1"/>
</dbReference>
<dbReference type="Pfam" id="PF01555">
    <property type="entry name" value="N6_N4_Mtase"/>
    <property type="match status" value="1"/>
</dbReference>
<dbReference type="PRINTS" id="PR00506">
    <property type="entry name" value="D21N6MTFRASE"/>
</dbReference>
<dbReference type="SUPFAM" id="SSF53335">
    <property type="entry name" value="S-adenosyl-L-methionine-dependent methyltransferases"/>
    <property type="match status" value="1"/>
</dbReference>
<dbReference type="PROSITE" id="PS00092">
    <property type="entry name" value="N6_MTASE"/>
    <property type="match status" value="1"/>
</dbReference>
<organism>
    <name type="scientific">Bacillus amyloliquefaciens</name>
    <name type="common">Bacillus velezensis</name>
    <dbReference type="NCBI Taxonomy" id="1390"/>
    <lineage>
        <taxon>Bacteria</taxon>
        <taxon>Bacillati</taxon>
        <taxon>Bacillota</taxon>
        <taxon>Bacilli</taxon>
        <taxon>Bacillales</taxon>
        <taxon>Bacillaceae</taxon>
        <taxon>Bacillus</taxon>
        <taxon>Bacillus amyloliquefaciens group</taxon>
    </lineage>
</organism>